<accession>C5BP36</accession>
<protein>
    <recommendedName>
        <fullName evidence="1">UDP-N-acetylmuramoylalanine--D-glutamate ligase</fullName>
        <ecNumber evidence="1">6.3.2.9</ecNumber>
    </recommendedName>
    <alternativeName>
        <fullName evidence="1">D-glutamic acid-adding enzyme</fullName>
    </alternativeName>
    <alternativeName>
        <fullName evidence="1">UDP-N-acetylmuramoyl-L-alanyl-D-glutamate synthetase</fullName>
    </alternativeName>
</protein>
<name>MURD_TERTT</name>
<proteinExistence type="inferred from homology"/>
<evidence type="ECO:0000255" key="1">
    <source>
        <dbReference type="HAMAP-Rule" id="MF_00639"/>
    </source>
</evidence>
<feature type="chain" id="PRO_1000212375" description="UDP-N-acetylmuramoylalanine--D-glutamate ligase">
    <location>
        <begin position="1"/>
        <end position="453"/>
    </location>
</feature>
<feature type="binding site" evidence="1">
    <location>
        <begin position="120"/>
        <end position="126"/>
    </location>
    <ligand>
        <name>ATP</name>
        <dbReference type="ChEBI" id="CHEBI:30616"/>
    </ligand>
</feature>
<gene>
    <name evidence="1" type="primary">murD</name>
    <name type="ordered locus">TERTU_3051</name>
</gene>
<keyword id="KW-0067">ATP-binding</keyword>
<keyword id="KW-0131">Cell cycle</keyword>
<keyword id="KW-0132">Cell division</keyword>
<keyword id="KW-0133">Cell shape</keyword>
<keyword id="KW-0961">Cell wall biogenesis/degradation</keyword>
<keyword id="KW-0963">Cytoplasm</keyword>
<keyword id="KW-0436">Ligase</keyword>
<keyword id="KW-0547">Nucleotide-binding</keyword>
<keyword id="KW-0573">Peptidoglycan synthesis</keyword>
<keyword id="KW-1185">Reference proteome</keyword>
<reference key="1">
    <citation type="journal article" date="2009" name="PLoS ONE">
        <title>The complete genome of Teredinibacter turnerae T7901: an intracellular endosymbiont of marine wood-boring bivalves (shipworms).</title>
        <authorList>
            <person name="Yang J.C."/>
            <person name="Madupu R."/>
            <person name="Durkin A.S."/>
            <person name="Ekborg N.A."/>
            <person name="Pedamallu C.S."/>
            <person name="Hostetler J.B."/>
            <person name="Radune D."/>
            <person name="Toms B.S."/>
            <person name="Henrissat B."/>
            <person name="Coutinho P.M."/>
            <person name="Schwarz S."/>
            <person name="Field L."/>
            <person name="Trindade-Silva A.E."/>
            <person name="Soares C.A.G."/>
            <person name="Elshahawi S."/>
            <person name="Hanora A."/>
            <person name="Schmidt E.W."/>
            <person name="Haygood M.G."/>
            <person name="Posfai J."/>
            <person name="Benner J."/>
            <person name="Madinger C."/>
            <person name="Nove J."/>
            <person name="Anton B."/>
            <person name="Chaudhary K."/>
            <person name="Foster J."/>
            <person name="Holman A."/>
            <person name="Kumar S."/>
            <person name="Lessard P.A."/>
            <person name="Luyten Y.A."/>
            <person name="Slatko B."/>
            <person name="Wood N."/>
            <person name="Wu B."/>
            <person name="Teplitski M."/>
            <person name="Mougous J.D."/>
            <person name="Ward N."/>
            <person name="Eisen J.A."/>
            <person name="Badger J.H."/>
            <person name="Distel D.L."/>
        </authorList>
    </citation>
    <scope>NUCLEOTIDE SEQUENCE [LARGE SCALE GENOMIC DNA]</scope>
    <source>
        <strain>ATCC 39867 / T7901</strain>
    </source>
</reference>
<dbReference type="EC" id="6.3.2.9" evidence="1"/>
<dbReference type="EMBL" id="CP001614">
    <property type="protein sequence ID" value="ACR12174.1"/>
    <property type="molecule type" value="Genomic_DNA"/>
</dbReference>
<dbReference type="RefSeq" id="WP_015818286.1">
    <property type="nucleotide sequence ID" value="NC_012997.1"/>
</dbReference>
<dbReference type="SMR" id="C5BP36"/>
<dbReference type="STRING" id="377629.TERTU_3051"/>
<dbReference type="KEGG" id="ttu:TERTU_3051"/>
<dbReference type="eggNOG" id="COG0771">
    <property type="taxonomic scope" value="Bacteria"/>
</dbReference>
<dbReference type="HOGENOM" id="CLU_032540_1_0_6"/>
<dbReference type="OrthoDB" id="9809796at2"/>
<dbReference type="UniPathway" id="UPA00219"/>
<dbReference type="Proteomes" id="UP000009080">
    <property type="component" value="Chromosome"/>
</dbReference>
<dbReference type="GO" id="GO:0005737">
    <property type="term" value="C:cytoplasm"/>
    <property type="evidence" value="ECO:0007669"/>
    <property type="project" value="UniProtKB-SubCell"/>
</dbReference>
<dbReference type="GO" id="GO:0005524">
    <property type="term" value="F:ATP binding"/>
    <property type="evidence" value="ECO:0007669"/>
    <property type="project" value="UniProtKB-UniRule"/>
</dbReference>
<dbReference type="GO" id="GO:0008764">
    <property type="term" value="F:UDP-N-acetylmuramoylalanine-D-glutamate ligase activity"/>
    <property type="evidence" value="ECO:0007669"/>
    <property type="project" value="UniProtKB-UniRule"/>
</dbReference>
<dbReference type="GO" id="GO:0051301">
    <property type="term" value="P:cell division"/>
    <property type="evidence" value="ECO:0007669"/>
    <property type="project" value="UniProtKB-KW"/>
</dbReference>
<dbReference type="GO" id="GO:0071555">
    <property type="term" value="P:cell wall organization"/>
    <property type="evidence" value="ECO:0007669"/>
    <property type="project" value="UniProtKB-KW"/>
</dbReference>
<dbReference type="GO" id="GO:0009252">
    <property type="term" value="P:peptidoglycan biosynthetic process"/>
    <property type="evidence" value="ECO:0007669"/>
    <property type="project" value="UniProtKB-UniRule"/>
</dbReference>
<dbReference type="GO" id="GO:0008360">
    <property type="term" value="P:regulation of cell shape"/>
    <property type="evidence" value="ECO:0007669"/>
    <property type="project" value="UniProtKB-KW"/>
</dbReference>
<dbReference type="Gene3D" id="3.90.190.20">
    <property type="entry name" value="Mur ligase, C-terminal domain"/>
    <property type="match status" value="1"/>
</dbReference>
<dbReference type="Gene3D" id="3.40.1190.10">
    <property type="entry name" value="Mur-like, catalytic domain"/>
    <property type="match status" value="1"/>
</dbReference>
<dbReference type="Gene3D" id="3.40.50.720">
    <property type="entry name" value="NAD(P)-binding Rossmann-like Domain"/>
    <property type="match status" value="1"/>
</dbReference>
<dbReference type="HAMAP" id="MF_00639">
    <property type="entry name" value="MurD"/>
    <property type="match status" value="1"/>
</dbReference>
<dbReference type="InterPro" id="IPR036565">
    <property type="entry name" value="Mur-like_cat_sf"/>
</dbReference>
<dbReference type="InterPro" id="IPR004101">
    <property type="entry name" value="Mur_ligase_C"/>
</dbReference>
<dbReference type="InterPro" id="IPR036615">
    <property type="entry name" value="Mur_ligase_C_dom_sf"/>
</dbReference>
<dbReference type="InterPro" id="IPR013221">
    <property type="entry name" value="Mur_ligase_cen"/>
</dbReference>
<dbReference type="InterPro" id="IPR005762">
    <property type="entry name" value="MurD"/>
</dbReference>
<dbReference type="NCBIfam" id="TIGR01087">
    <property type="entry name" value="murD"/>
    <property type="match status" value="1"/>
</dbReference>
<dbReference type="PANTHER" id="PTHR43692">
    <property type="entry name" value="UDP-N-ACETYLMURAMOYLALANINE--D-GLUTAMATE LIGASE"/>
    <property type="match status" value="1"/>
</dbReference>
<dbReference type="PANTHER" id="PTHR43692:SF1">
    <property type="entry name" value="UDP-N-ACETYLMURAMOYLALANINE--D-GLUTAMATE LIGASE"/>
    <property type="match status" value="1"/>
</dbReference>
<dbReference type="Pfam" id="PF02875">
    <property type="entry name" value="Mur_ligase_C"/>
    <property type="match status" value="1"/>
</dbReference>
<dbReference type="Pfam" id="PF08245">
    <property type="entry name" value="Mur_ligase_M"/>
    <property type="match status" value="1"/>
</dbReference>
<dbReference type="Pfam" id="PF21799">
    <property type="entry name" value="MurD-like_N"/>
    <property type="match status" value="1"/>
</dbReference>
<dbReference type="SUPFAM" id="SSF51984">
    <property type="entry name" value="MurCD N-terminal domain"/>
    <property type="match status" value="1"/>
</dbReference>
<dbReference type="SUPFAM" id="SSF53623">
    <property type="entry name" value="MurD-like peptide ligases, catalytic domain"/>
    <property type="match status" value="1"/>
</dbReference>
<dbReference type="SUPFAM" id="SSF53244">
    <property type="entry name" value="MurD-like peptide ligases, peptide-binding domain"/>
    <property type="match status" value="1"/>
</dbReference>
<organism>
    <name type="scientific">Teredinibacter turnerae (strain ATCC 39867 / T7901)</name>
    <dbReference type="NCBI Taxonomy" id="377629"/>
    <lineage>
        <taxon>Bacteria</taxon>
        <taxon>Pseudomonadati</taxon>
        <taxon>Pseudomonadota</taxon>
        <taxon>Gammaproteobacteria</taxon>
        <taxon>Cellvibrionales</taxon>
        <taxon>Cellvibrionaceae</taxon>
        <taxon>Teredinibacter</taxon>
    </lineage>
</organism>
<comment type="function">
    <text evidence="1">Cell wall formation. Catalyzes the addition of glutamate to the nucleotide precursor UDP-N-acetylmuramoyl-L-alanine (UMA).</text>
</comment>
<comment type="catalytic activity">
    <reaction evidence="1">
        <text>UDP-N-acetyl-alpha-D-muramoyl-L-alanine + D-glutamate + ATP = UDP-N-acetyl-alpha-D-muramoyl-L-alanyl-D-glutamate + ADP + phosphate + H(+)</text>
        <dbReference type="Rhea" id="RHEA:16429"/>
        <dbReference type="ChEBI" id="CHEBI:15378"/>
        <dbReference type="ChEBI" id="CHEBI:29986"/>
        <dbReference type="ChEBI" id="CHEBI:30616"/>
        <dbReference type="ChEBI" id="CHEBI:43474"/>
        <dbReference type="ChEBI" id="CHEBI:83898"/>
        <dbReference type="ChEBI" id="CHEBI:83900"/>
        <dbReference type="ChEBI" id="CHEBI:456216"/>
        <dbReference type="EC" id="6.3.2.9"/>
    </reaction>
</comment>
<comment type="pathway">
    <text evidence="1">Cell wall biogenesis; peptidoglycan biosynthesis.</text>
</comment>
<comment type="subcellular location">
    <subcellularLocation>
        <location evidence="1">Cytoplasm</location>
    </subcellularLocation>
</comment>
<comment type="similarity">
    <text evidence="1">Belongs to the MurCDEF family.</text>
</comment>
<sequence>MNGLLASDKYVVIVGLGATGLSVARYLHLRGERFSVVDTREHPPGADELMALNNKVDHHFGAVEQPQIDLLLNAAEIVLSPGVDRRTDFIQAALKNNISIVGDIELFLREVQVPVVGITGSNGKSTVTALMAAVGAKAGFKTCAAGNIGLPVLDALQENAELYILELSSFQLESVSRPGLTVACMLNVSEDHMDRYNRFVDYCMAKQRIYFGAQNVVYNIDDKLTQPPIVDGVARRGFSLSKPIEEGESAFYFSADTGNLCAAKDNLINIDQIKIFGRHNVANVLAVFAMADALNITRAATCAAVQEFSGLDHRCQWVAKKRGVTFINDSKATNVGAAQAAIAGLSASFKRILLIAGGDGKDANFFSFGKLVDAHVAVLILMGRDAGAIADCVSDTTPVVQAQTMTEAVEVAFSSAEEGDLVLLSPACASFDMFAGFEDRGRQFAAAVEGLTE</sequence>